<organism>
    <name type="scientific">Nitrosospira multiformis (strain ATCC 25196 / NCIMB 11849 / C 71)</name>
    <dbReference type="NCBI Taxonomy" id="323848"/>
    <lineage>
        <taxon>Bacteria</taxon>
        <taxon>Pseudomonadati</taxon>
        <taxon>Pseudomonadota</taxon>
        <taxon>Betaproteobacteria</taxon>
        <taxon>Nitrosomonadales</taxon>
        <taxon>Nitrosomonadaceae</taxon>
        <taxon>Nitrosospira</taxon>
    </lineage>
</organism>
<sequence>MLTLNTRINSADKVSAQLVLPYESRENSRLRTALSSGEEVAIFIPRGTVLRHNDLLMGDDGRVVQIVAARESTYRITCANPHDLLRCAFHLGNRHTQTQVGEGFLRIARDNVLKEMLEGLGATVIEEDAQFEPEAGAYGSGGHHHHGESSQGHAHGPLAPIPVHQKIHRPSDIPSR</sequence>
<accession>Q2Y9M6</accession>
<name>UREE_NITMU</name>
<protein>
    <recommendedName>
        <fullName evidence="1">Urease accessory protein UreE</fullName>
    </recommendedName>
</protein>
<dbReference type="EMBL" id="CP000103">
    <property type="protein sequence ID" value="ABB74545.1"/>
    <property type="molecule type" value="Genomic_DNA"/>
</dbReference>
<dbReference type="RefSeq" id="WP_011380586.1">
    <property type="nucleotide sequence ID" value="NC_007614.1"/>
</dbReference>
<dbReference type="SMR" id="Q2Y9M6"/>
<dbReference type="STRING" id="323848.Nmul_A1242"/>
<dbReference type="KEGG" id="nmu:Nmul_A1242"/>
<dbReference type="eggNOG" id="COG2371">
    <property type="taxonomic scope" value="Bacteria"/>
</dbReference>
<dbReference type="HOGENOM" id="CLU_093757_2_0_4"/>
<dbReference type="OrthoDB" id="5421304at2"/>
<dbReference type="Proteomes" id="UP000002718">
    <property type="component" value="Chromosome"/>
</dbReference>
<dbReference type="GO" id="GO:0005737">
    <property type="term" value="C:cytoplasm"/>
    <property type="evidence" value="ECO:0007669"/>
    <property type="project" value="UniProtKB-SubCell"/>
</dbReference>
<dbReference type="GO" id="GO:0016151">
    <property type="term" value="F:nickel cation binding"/>
    <property type="evidence" value="ECO:0007669"/>
    <property type="project" value="UniProtKB-UniRule"/>
</dbReference>
<dbReference type="GO" id="GO:0051082">
    <property type="term" value="F:unfolded protein binding"/>
    <property type="evidence" value="ECO:0007669"/>
    <property type="project" value="UniProtKB-UniRule"/>
</dbReference>
<dbReference type="GO" id="GO:0006457">
    <property type="term" value="P:protein folding"/>
    <property type="evidence" value="ECO:0007669"/>
    <property type="project" value="InterPro"/>
</dbReference>
<dbReference type="GO" id="GO:0065003">
    <property type="term" value="P:protein-containing complex assembly"/>
    <property type="evidence" value="ECO:0007669"/>
    <property type="project" value="InterPro"/>
</dbReference>
<dbReference type="GO" id="GO:0019627">
    <property type="term" value="P:urea metabolic process"/>
    <property type="evidence" value="ECO:0007669"/>
    <property type="project" value="InterPro"/>
</dbReference>
<dbReference type="CDD" id="cd00571">
    <property type="entry name" value="UreE"/>
    <property type="match status" value="1"/>
</dbReference>
<dbReference type="Gene3D" id="2.60.260.20">
    <property type="entry name" value="Urease metallochaperone UreE, N-terminal domain"/>
    <property type="match status" value="1"/>
</dbReference>
<dbReference type="Gene3D" id="3.30.70.790">
    <property type="entry name" value="UreE, C-terminal domain"/>
    <property type="match status" value="1"/>
</dbReference>
<dbReference type="HAMAP" id="MF_00822">
    <property type="entry name" value="UreE"/>
    <property type="match status" value="1"/>
</dbReference>
<dbReference type="InterPro" id="IPR012406">
    <property type="entry name" value="UreE"/>
</dbReference>
<dbReference type="InterPro" id="IPR007864">
    <property type="entry name" value="UreE_C_dom"/>
</dbReference>
<dbReference type="InterPro" id="IPR004029">
    <property type="entry name" value="UreE_N"/>
</dbReference>
<dbReference type="InterPro" id="IPR036118">
    <property type="entry name" value="UreE_N_sf"/>
</dbReference>
<dbReference type="NCBIfam" id="NF009751">
    <property type="entry name" value="PRK13261.1-1"/>
    <property type="match status" value="1"/>
</dbReference>
<dbReference type="Pfam" id="PF05194">
    <property type="entry name" value="UreE_C"/>
    <property type="match status" value="1"/>
</dbReference>
<dbReference type="Pfam" id="PF02814">
    <property type="entry name" value="UreE_N"/>
    <property type="match status" value="1"/>
</dbReference>
<dbReference type="SMART" id="SM00988">
    <property type="entry name" value="UreE_N"/>
    <property type="match status" value="1"/>
</dbReference>
<dbReference type="SUPFAM" id="SSF69737">
    <property type="entry name" value="Urease metallochaperone UreE, C-terminal domain"/>
    <property type="match status" value="1"/>
</dbReference>
<dbReference type="SUPFAM" id="SSF69287">
    <property type="entry name" value="Urease metallochaperone UreE, N-terminal domain"/>
    <property type="match status" value="1"/>
</dbReference>
<proteinExistence type="inferred from homology"/>
<comment type="function">
    <text evidence="1">Involved in urease metallocenter assembly. Binds nickel. Probably functions as a nickel donor during metallocenter assembly.</text>
</comment>
<comment type="subcellular location">
    <subcellularLocation>
        <location evidence="1">Cytoplasm</location>
    </subcellularLocation>
</comment>
<comment type="similarity">
    <text evidence="1">Belongs to the UreE family.</text>
</comment>
<feature type="chain" id="PRO_1000083900" description="Urease accessory protein UreE">
    <location>
        <begin position="1"/>
        <end position="176"/>
    </location>
</feature>
<feature type="region of interest" description="Disordered" evidence="2">
    <location>
        <begin position="134"/>
        <end position="176"/>
    </location>
</feature>
<evidence type="ECO:0000255" key="1">
    <source>
        <dbReference type="HAMAP-Rule" id="MF_00822"/>
    </source>
</evidence>
<evidence type="ECO:0000256" key="2">
    <source>
        <dbReference type="SAM" id="MobiDB-lite"/>
    </source>
</evidence>
<reference key="1">
    <citation type="submission" date="2005-08" db="EMBL/GenBank/DDBJ databases">
        <title>Complete sequence of chromosome 1 of Nitrosospira multiformis ATCC 25196.</title>
        <authorList>
            <person name="Copeland A."/>
            <person name="Lucas S."/>
            <person name="Lapidus A."/>
            <person name="Barry K."/>
            <person name="Detter J.C."/>
            <person name="Glavina T."/>
            <person name="Hammon N."/>
            <person name="Israni S."/>
            <person name="Pitluck S."/>
            <person name="Chain P."/>
            <person name="Malfatti S."/>
            <person name="Shin M."/>
            <person name="Vergez L."/>
            <person name="Schmutz J."/>
            <person name="Larimer F."/>
            <person name="Land M."/>
            <person name="Hauser L."/>
            <person name="Kyrpides N."/>
            <person name="Lykidis A."/>
            <person name="Richardson P."/>
        </authorList>
    </citation>
    <scope>NUCLEOTIDE SEQUENCE [LARGE SCALE GENOMIC DNA]</scope>
    <source>
        <strain>ATCC 25196 / NCIMB 11849 / C 71</strain>
    </source>
</reference>
<keyword id="KW-0143">Chaperone</keyword>
<keyword id="KW-0963">Cytoplasm</keyword>
<keyword id="KW-0533">Nickel</keyword>
<keyword id="KW-0996">Nickel insertion</keyword>
<keyword id="KW-1185">Reference proteome</keyword>
<gene>
    <name evidence="1" type="primary">ureE</name>
    <name type="ordered locus">Nmul_A1242</name>
</gene>